<evidence type="ECO:0000255" key="1">
    <source>
        <dbReference type="HAMAP-Rule" id="MF_01337"/>
    </source>
</evidence>
<evidence type="ECO:0000305" key="2"/>
<sequence>MRDSKDRFIIRKNRVRAKIAKLSGGGYPRLSVFKSNRHIYAQVIENIGSNKSNTIAAASTLDRDIFTELKYYKCNIQYAKKVGQLLAERANSKGITSVVFDRGGYKYHGVIKALADGAREKLNF</sequence>
<gene>
    <name evidence="1" type="primary">rplR</name>
    <name type="ordered locus">OTT_1060</name>
</gene>
<keyword id="KW-0687">Ribonucleoprotein</keyword>
<keyword id="KW-0689">Ribosomal protein</keyword>
<keyword id="KW-0694">RNA-binding</keyword>
<keyword id="KW-0699">rRNA-binding</keyword>
<proteinExistence type="inferred from homology"/>
<reference key="1">
    <citation type="journal article" date="2008" name="DNA Res.">
        <title>The whole-genome sequencing of the obligate intracellular bacterium Orientia tsutsugamushi revealed massive gene amplification during reductive genome evolution.</title>
        <authorList>
            <person name="Nakayama K."/>
            <person name="Yamashita A."/>
            <person name="Kurokawa K."/>
            <person name="Morimoto T."/>
            <person name="Ogawa M."/>
            <person name="Fukuhara M."/>
            <person name="Urakami H."/>
            <person name="Ohnishi M."/>
            <person name="Uchiyama I."/>
            <person name="Ogura Y."/>
            <person name="Ooka T."/>
            <person name="Oshima K."/>
            <person name="Tamura A."/>
            <person name="Hattori M."/>
            <person name="Hayashi T."/>
        </authorList>
    </citation>
    <scope>NUCLEOTIDE SEQUENCE [LARGE SCALE GENOMIC DNA]</scope>
    <source>
        <strain>Ikeda</strain>
    </source>
</reference>
<protein>
    <recommendedName>
        <fullName evidence="1">Large ribosomal subunit protein uL18</fullName>
    </recommendedName>
    <alternativeName>
        <fullName evidence="2">50S ribosomal protein L18</fullName>
    </alternativeName>
</protein>
<name>RL18_ORITI</name>
<comment type="function">
    <text evidence="1">This is one of the proteins that bind and probably mediate the attachment of the 5S RNA into the large ribosomal subunit, where it forms part of the central protuberance.</text>
</comment>
<comment type="subunit">
    <text evidence="1">Part of the 50S ribosomal subunit; part of the 5S rRNA/L5/L18/L25 subcomplex. Contacts the 5S and 23S rRNAs.</text>
</comment>
<comment type="similarity">
    <text evidence="1">Belongs to the universal ribosomal protein uL18 family.</text>
</comment>
<feature type="chain" id="PRO_1000142695" description="Large ribosomal subunit protein uL18">
    <location>
        <begin position="1"/>
        <end position="124"/>
    </location>
</feature>
<accession>B3CT21</accession>
<dbReference type="EMBL" id="AP008981">
    <property type="protein sequence ID" value="BAG40518.1"/>
    <property type="molecule type" value="Genomic_DNA"/>
</dbReference>
<dbReference type="RefSeq" id="WP_012461621.1">
    <property type="nucleotide sequence ID" value="NC_010793.1"/>
</dbReference>
<dbReference type="SMR" id="B3CT21"/>
<dbReference type="KEGG" id="ott:OTT_1060"/>
<dbReference type="HOGENOM" id="CLU_098841_0_1_5"/>
<dbReference type="OrthoDB" id="9810939at2"/>
<dbReference type="Proteomes" id="UP000001033">
    <property type="component" value="Chromosome"/>
</dbReference>
<dbReference type="GO" id="GO:0022625">
    <property type="term" value="C:cytosolic large ribosomal subunit"/>
    <property type="evidence" value="ECO:0007669"/>
    <property type="project" value="TreeGrafter"/>
</dbReference>
<dbReference type="GO" id="GO:0008097">
    <property type="term" value="F:5S rRNA binding"/>
    <property type="evidence" value="ECO:0007669"/>
    <property type="project" value="TreeGrafter"/>
</dbReference>
<dbReference type="GO" id="GO:0003735">
    <property type="term" value="F:structural constituent of ribosome"/>
    <property type="evidence" value="ECO:0007669"/>
    <property type="project" value="InterPro"/>
</dbReference>
<dbReference type="GO" id="GO:0006412">
    <property type="term" value="P:translation"/>
    <property type="evidence" value="ECO:0007669"/>
    <property type="project" value="UniProtKB-UniRule"/>
</dbReference>
<dbReference type="CDD" id="cd00432">
    <property type="entry name" value="Ribosomal_L18_L5e"/>
    <property type="match status" value="1"/>
</dbReference>
<dbReference type="FunFam" id="3.30.420.100:FF:000001">
    <property type="entry name" value="50S ribosomal protein L18"/>
    <property type="match status" value="1"/>
</dbReference>
<dbReference type="Gene3D" id="3.30.420.100">
    <property type="match status" value="1"/>
</dbReference>
<dbReference type="HAMAP" id="MF_01337_B">
    <property type="entry name" value="Ribosomal_uL18_B"/>
    <property type="match status" value="1"/>
</dbReference>
<dbReference type="InterPro" id="IPR004389">
    <property type="entry name" value="Ribosomal_uL18_bac-type"/>
</dbReference>
<dbReference type="InterPro" id="IPR005484">
    <property type="entry name" value="Ribosomal_uL18_bac/euk"/>
</dbReference>
<dbReference type="NCBIfam" id="TIGR00060">
    <property type="entry name" value="L18_bact"/>
    <property type="match status" value="1"/>
</dbReference>
<dbReference type="PANTHER" id="PTHR12899">
    <property type="entry name" value="39S RIBOSOMAL PROTEIN L18, MITOCHONDRIAL"/>
    <property type="match status" value="1"/>
</dbReference>
<dbReference type="PANTHER" id="PTHR12899:SF3">
    <property type="entry name" value="LARGE RIBOSOMAL SUBUNIT PROTEIN UL18M"/>
    <property type="match status" value="1"/>
</dbReference>
<dbReference type="Pfam" id="PF00861">
    <property type="entry name" value="Ribosomal_L18p"/>
    <property type="match status" value="1"/>
</dbReference>
<dbReference type="SUPFAM" id="SSF53137">
    <property type="entry name" value="Translational machinery components"/>
    <property type="match status" value="1"/>
</dbReference>
<organism>
    <name type="scientific">Orientia tsutsugamushi (strain Ikeda)</name>
    <name type="common">Rickettsia tsutsugamushi</name>
    <dbReference type="NCBI Taxonomy" id="334380"/>
    <lineage>
        <taxon>Bacteria</taxon>
        <taxon>Pseudomonadati</taxon>
        <taxon>Pseudomonadota</taxon>
        <taxon>Alphaproteobacteria</taxon>
        <taxon>Rickettsiales</taxon>
        <taxon>Rickettsiaceae</taxon>
        <taxon>Rickettsieae</taxon>
        <taxon>Orientia</taxon>
    </lineage>
</organism>